<keyword id="KW-0143">Chaperone</keyword>
<keyword id="KW-0963">Cytoplasm</keyword>
<keyword id="KW-0996">Nickel insertion</keyword>
<keyword id="KW-1185">Reference proteome</keyword>
<name>UREF_PARDP</name>
<feature type="chain" id="PRO_0000344142" description="Urease accessory protein UreF">
    <location>
        <begin position="1"/>
        <end position="215"/>
    </location>
</feature>
<comment type="function">
    <text evidence="1">Required for maturation of urease via the functional incorporation of the urease nickel metallocenter.</text>
</comment>
<comment type="subunit">
    <text evidence="1">UreD, UreF and UreG form a complex that acts as a GTP-hydrolysis-dependent molecular chaperone, activating the urease apoprotein by helping to assemble the nickel containing metallocenter of UreC. The UreE protein probably delivers the nickel.</text>
</comment>
<comment type="subcellular location">
    <subcellularLocation>
        <location evidence="1">Cytoplasm</location>
    </subcellularLocation>
</comment>
<comment type="similarity">
    <text evidence="1">Belongs to the UreF family.</text>
</comment>
<sequence length="215" mass="22456">MTTITPEAARLRLAQYLSPAFPTGGFAWSQGLEWAMDQGAVTRATLPQWLEDWLDHGAGWCDAVLLSLALRRGADHAELDDLARAMCPCARRLAETVEQGTAFAANVAALTGRPQSAAALPVAVGRACGCLPLPAGEIIGLYLQAQAAALISAAVRFLPLGPVEGQAMLAGLQPALLAAAARAGTADPKDLASATWGADLAAMRHETMVTRIFRS</sequence>
<organism>
    <name type="scientific">Paracoccus denitrificans (strain Pd 1222)</name>
    <dbReference type="NCBI Taxonomy" id="318586"/>
    <lineage>
        <taxon>Bacteria</taxon>
        <taxon>Pseudomonadati</taxon>
        <taxon>Pseudomonadota</taxon>
        <taxon>Alphaproteobacteria</taxon>
        <taxon>Rhodobacterales</taxon>
        <taxon>Paracoccaceae</taxon>
        <taxon>Paracoccus</taxon>
    </lineage>
</organism>
<dbReference type="EMBL" id="CP000489">
    <property type="protein sequence ID" value="ABL69311.1"/>
    <property type="molecule type" value="Genomic_DNA"/>
</dbReference>
<dbReference type="RefSeq" id="WP_011747529.1">
    <property type="nucleotide sequence ID" value="NC_008686.1"/>
</dbReference>
<dbReference type="SMR" id="A1B1B7"/>
<dbReference type="STRING" id="318586.Pden_1206"/>
<dbReference type="EnsemblBacteria" id="ABL69311">
    <property type="protein sequence ID" value="ABL69311"/>
    <property type="gene ID" value="Pden_1206"/>
</dbReference>
<dbReference type="GeneID" id="93452422"/>
<dbReference type="KEGG" id="pde:Pden_1206"/>
<dbReference type="eggNOG" id="COG0830">
    <property type="taxonomic scope" value="Bacteria"/>
</dbReference>
<dbReference type="HOGENOM" id="CLU_049215_2_1_5"/>
<dbReference type="OrthoDB" id="9798772at2"/>
<dbReference type="Proteomes" id="UP000000361">
    <property type="component" value="Chromosome 1"/>
</dbReference>
<dbReference type="GO" id="GO:0005737">
    <property type="term" value="C:cytoplasm"/>
    <property type="evidence" value="ECO:0007669"/>
    <property type="project" value="UniProtKB-SubCell"/>
</dbReference>
<dbReference type="GO" id="GO:0016151">
    <property type="term" value="F:nickel cation binding"/>
    <property type="evidence" value="ECO:0007669"/>
    <property type="project" value="UniProtKB-UniRule"/>
</dbReference>
<dbReference type="Gene3D" id="1.10.4190.10">
    <property type="entry name" value="Urease accessory protein UreF"/>
    <property type="match status" value="1"/>
</dbReference>
<dbReference type="HAMAP" id="MF_01385">
    <property type="entry name" value="UreF"/>
    <property type="match status" value="1"/>
</dbReference>
<dbReference type="InterPro" id="IPR002639">
    <property type="entry name" value="UreF"/>
</dbReference>
<dbReference type="InterPro" id="IPR038277">
    <property type="entry name" value="UreF_sf"/>
</dbReference>
<dbReference type="PANTHER" id="PTHR33620">
    <property type="entry name" value="UREASE ACCESSORY PROTEIN F"/>
    <property type="match status" value="1"/>
</dbReference>
<dbReference type="PANTHER" id="PTHR33620:SF1">
    <property type="entry name" value="UREASE ACCESSORY PROTEIN F"/>
    <property type="match status" value="1"/>
</dbReference>
<dbReference type="Pfam" id="PF01730">
    <property type="entry name" value="UreF"/>
    <property type="match status" value="1"/>
</dbReference>
<dbReference type="PIRSF" id="PIRSF009467">
    <property type="entry name" value="Ureas_acces_UreF"/>
    <property type="match status" value="1"/>
</dbReference>
<evidence type="ECO:0000255" key="1">
    <source>
        <dbReference type="HAMAP-Rule" id="MF_01385"/>
    </source>
</evidence>
<gene>
    <name evidence="1" type="primary">ureF</name>
    <name type="ordered locus">Pden_1206</name>
</gene>
<proteinExistence type="inferred from homology"/>
<reference key="1">
    <citation type="submission" date="2006-12" db="EMBL/GenBank/DDBJ databases">
        <title>Complete sequence of chromosome 1 of Paracoccus denitrificans PD1222.</title>
        <authorList>
            <person name="Copeland A."/>
            <person name="Lucas S."/>
            <person name="Lapidus A."/>
            <person name="Barry K."/>
            <person name="Detter J.C."/>
            <person name="Glavina del Rio T."/>
            <person name="Hammon N."/>
            <person name="Israni S."/>
            <person name="Dalin E."/>
            <person name="Tice H."/>
            <person name="Pitluck S."/>
            <person name="Munk A.C."/>
            <person name="Brettin T."/>
            <person name="Bruce D."/>
            <person name="Han C."/>
            <person name="Tapia R."/>
            <person name="Gilna P."/>
            <person name="Schmutz J."/>
            <person name="Larimer F."/>
            <person name="Land M."/>
            <person name="Hauser L."/>
            <person name="Kyrpides N."/>
            <person name="Lykidis A."/>
            <person name="Spiro S."/>
            <person name="Richardson D.J."/>
            <person name="Moir J.W.B."/>
            <person name="Ferguson S.J."/>
            <person name="van Spanning R.J.M."/>
            <person name="Richardson P."/>
        </authorList>
    </citation>
    <scope>NUCLEOTIDE SEQUENCE [LARGE SCALE GENOMIC DNA]</scope>
    <source>
        <strain>Pd 1222</strain>
    </source>
</reference>
<protein>
    <recommendedName>
        <fullName evidence="1">Urease accessory protein UreF</fullName>
    </recommendedName>
</protein>
<accession>A1B1B7</accession>